<protein>
    <recommendedName>
        <fullName evidence="1">Xanthine phosphoribosyltransferase</fullName>
        <shortName evidence="1">XPRTase</shortName>
        <ecNumber evidence="1">2.4.2.22</ecNumber>
    </recommendedName>
</protein>
<name>XPT_LACDB</name>
<keyword id="KW-0963">Cytoplasm</keyword>
<keyword id="KW-0328">Glycosyltransferase</keyword>
<keyword id="KW-0660">Purine salvage</keyword>
<keyword id="KW-0808">Transferase</keyword>
<dbReference type="EC" id="2.4.2.22" evidence="1"/>
<dbReference type="EMBL" id="CP000412">
    <property type="protein sequence ID" value="ABJ57916.1"/>
    <property type="molecule type" value="Genomic_DNA"/>
</dbReference>
<dbReference type="RefSeq" id="WP_003619447.1">
    <property type="nucleotide sequence ID" value="NC_008529.1"/>
</dbReference>
<dbReference type="SMR" id="Q04CA6"/>
<dbReference type="KEGG" id="lbu:LBUL_0250"/>
<dbReference type="HOGENOM" id="CLU_099015_0_0_9"/>
<dbReference type="BioCyc" id="LDEL321956:LBUL_RS01160-MONOMER"/>
<dbReference type="UniPathway" id="UPA00602">
    <property type="reaction ID" value="UER00658"/>
</dbReference>
<dbReference type="GO" id="GO:0005737">
    <property type="term" value="C:cytoplasm"/>
    <property type="evidence" value="ECO:0007669"/>
    <property type="project" value="UniProtKB-SubCell"/>
</dbReference>
<dbReference type="GO" id="GO:0000310">
    <property type="term" value="F:xanthine phosphoribosyltransferase activity"/>
    <property type="evidence" value="ECO:0007669"/>
    <property type="project" value="UniProtKB-UniRule"/>
</dbReference>
<dbReference type="GO" id="GO:0006166">
    <property type="term" value="P:purine ribonucleoside salvage"/>
    <property type="evidence" value="ECO:0007669"/>
    <property type="project" value="UniProtKB-KW"/>
</dbReference>
<dbReference type="GO" id="GO:0046110">
    <property type="term" value="P:xanthine metabolic process"/>
    <property type="evidence" value="ECO:0007669"/>
    <property type="project" value="InterPro"/>
</dbReference>
<dbReference type="GO" id="GO:0032265">
    <property type="term" value="P:XMP salvage"/>
    <property type="evidence" value="ECO:0007669"/>
    <property type="project" value="UniProtKB-UniRule"/>
</dbReference>
<dbReference type="CDD" id="cd06223">
    <property type="entry name" value="PRTases_typeI"/>
    <property type="match status" value="1"/>
</dbReference>
<dbReference type="Gene3D" id="3.40.50.2020">
    <property type="match status" value="1"/>
</dbReference>
<dbReference type="HAMAP" id="MF_01184">
    <property type="entry name" value="XPRTase"/>
    <property type="match status" value="1"/>
</dbReference>
<dbReference type="InterPro" id="IPR000836">
    <property type="entry name" value="PRibTrfase_dom"/>
</dbReference>
<dbReference type="InterPro" id="IPR029057">
    <property type="entry name" value="PRTase-like"/>
</dbReference>
<dbReference type="InterPro" id="IPR050118">
    <property type="entry name" value="Pur/Pyrimidine_PRTase"/>
</dbReference>
<dbReference type="InterPro" id="IPR010079">
    <property type="entry name" value="Xanthine_PRibTrfase"/>
</dbReference>
<dbReference type="NCBIfam" id="NF006671">
    <property type="entry name" value="PRK09219.1"/>
    <property type="match status" value="1"/>
</dbReference>
<dbReference type="NCBIfam" id="TIGR01744">
    <property type="entry name" value="XPRTase"/>
    <property type="match status" value="1"/>
</dbReference>
<dbReference type="PANTHER" id="PTHR43864">
    <property type="entry name" value="HYPOXANTHINE/GUANINE PHOSPHORIBOSYLTRANSFERASE"/>
    <property type="match status" value="1"/>
</dbReference>
<dbReference type="PANTHER" id="PTHR43864:SF1">
    <property type="entry name" value="XANTHINE PHOSPHORIBOSYLTRANSFERASE"/>
    <property type="match status" value="1"/>
</dbReference>
<dbReference type="SUPFAM" id="SSF53271">
    <property type="entry name" value="PRTase-like"/>
    <property type="match status" value="1"/>
</dbReference>
<comment type="function">
    <text evidence="1">Converts the preformed base xanthine, a product of nucleic acid breakdown, to xanthosine 5'-monophosphate (XMP), so it can be reused for RNA or DNA synthesis.</text>
</comment>
<comment type="catalytic activity">
    <reaction evidence="1">
        <text>XMP + diphosphate = xanthine + 5-phospho-alpha-D-ribose 1-diphosphate</text>
        <dbReference type="Rhea" id="RHEA:10800"/>
        <dbReference type="ChEBI" id="CHEBI:17712"/>
        <dbReference type="ChEBI" id="CHEBI:33019"/>
        <dbReference type="ChEBI" id="CHEBI:57464"/>
        <dbReference type="ChEBI" id="CHEBI:58017"/>
        <dbReference type="EC" id="2.4.2.22"/>
    </reaction>
</comment>
<comment type="pathway">
    <text evidence="1">Purine metabolism; XMP biosynthesis via salvage pathway; XMP from xanthine: step 1/1.</text>
</comment>
<comment type="subunit">
    <text evidence="1">Homodimer.</text>
</comment>
<comment type="subcellular location">
    <subcellularLocation>
        <location evidence="1">Cytoplasm</location>
    </subcellularLocation>
</comment>
<comment type="similarity">
    <text evidence="1">Belongs to the purine/pyrimidine phosphoribosyltransferase family. Xpt subfamily.</text>
</comment>
<gene>
    <name evidence="1" type="primary">xpt</name>
    <name type="ordered locus">LBUL_0250</name>
</gene>
<organism>
    <name type="scientific">Lactobacillus delbrueckii subsp. bulgaricus (strain ATCC BAA-365 / Lb-18)</name>
    <dbReference type="NCBI Taxonomy" id="321956"/>
    <lineage>
        <taxon>Bacteria</taxon>
        <taxon>Bacillati</taxon>
        <taxon>Bacillota</taxon>
        <taxon>Bacilli</taxon>
        <taxon>Lactobacillales</taxon>
        <taxon>Lactobacillaceae</taxon>
        <taxon>Lactobacillus</taxon>
    </lineage>
</organism>
<feature type="chain" id="PRO_0000339705" description="Xanthine phosphoribosyltransferase">
    <location>
        <begin position="1"/>
        <end position="189"/>
    </location>
</feature>
<feature type="binding site" evidence="1">
    <location>
        <position position="20"/>
    </location>
    <ligand>
        <name>xanthine</name>
        <dbReference type="ChEBI" id="CHEBI:17712"/>
    </ligand>
</feature>
<feature type="binding site" evidence="1">
    <location>
        <position position="27"/>
    </location>
    <ligand>
        <name>xanthine</name>
        <dbReference type="ChEBI" id="CHEBI:17712"/>
    </ligand>
</feature>
<feature type="binding site" evidence="1">
    <location>
        <begin position="128"/>
        <end position="132"/>
    </location>
    <ligand>
        <name>5-phospho-alpha-D-ribose 1-diphosphate</name>
        <dbReference type="ChEBI" id="CHEBI:58017"/>
    </ligand>
</feature>
<feature type="binding site" evidence="1">
    <location>
        <position position="156"/>
    </location>
    <ligand>
        <name>xanthine</name>
        <dbReference type="ChEBI" id="CHEBI:17712"/>
    </ligand>
</feature>
<evidence type="ECO:0000255" key="1">
    <source>
        <dbReference type="HAMAP-Rule" id="MF_01184"/>
    </source>
</evidence>
<reference key="1">
    <citation type="journal article" date="2006" name="Proc. Natl. Acad. Sci. U.S.A.">
        <title>Comparative genomics of the lactic acid bacteria.</title>
        <authorList>
            <person name="Makarova K.S."/>
            <person name="Slesarev A."/>
            <person name="Wolf Y.I."/>
            <person name="Sorokin A."/>
            <person name="Mirkin B."/>
            <person name="Koonin E.V."/>
            <person name="Pavlov A."/>
            <person name="Pavlova N."/>
            <person name="Karamychev V."/>
            <person name="Polouchine N."/>
            <person name="Shakhova V."/>
            <person name="Grigoriev I."/>
            <person name="Lou Y."/>
            <person name="Rohksar D."/>
            <person name="Lucas S."/>
            <person name="Huang K."/>
            <person name="Goodstein D.M."/>
            <person name="Hawkins T."/>
            <person name="Plengvidhya V."/>
            <person name="Welker D."/>
            <person name="Hughes J."/>
            <person name="Goh Y."/>
            <person name="Benson A."/>
            <person name="Baldwin K."/>
            <person name="Lee J.-H."/>
            <person name="Diaz-Muniz I."/>
            <person name="Dosti B."/>
            <person name="Smeianov V."/>
            <person name="Wechter W."/>
            <person name="Barabote R."/>
            <person name="Lorca G."/>
            <person name="Altermann E."/>
            <person name="Barrangou R."/>
            <person name="Ganesan B."/>
            <person name="Xie Y."/>
            <person name="Rawsthorne H."/>
            <person name="Tamir D."/>
            <person name="Parker C."/>
            <person name="Breidt F."/>
            <person name="Broadbent J.R."/>
            <person name="Hutkins R."/>
            <person name="O'Sullivan D."/>
            <person name="Steele J."/>
            <person name="Unlu G."/>
            <person name="Saier M.H. Jr."/>
            <person name="Klaenhammer T."/>
            <person name="Richardson P."/>
            <person name="Kozyavkin S."/>
            <person name="Weimer B.C."/>
            <person name="Mills D.A."/>
        </authorList>
    </citation>
    <scope>NUCLEOTIDE SEQUENCE [LARGE SCALE GENOMIC DNA]</scope>
    <source>
        <strain>ATCC BAA-365 / Lb-18</strain>
    </source>
</reference>
<proteinExistence type="inferred from homology"/>
<sequence length="189" mass="20426">MELLEERIKKDGVVLPGNVLKVNSFLNHQIDPQLMMTLGQEFARLFKDAGVTRVLTAEASGIAPGIMAAYCLGVPMVFARKKKPSTVTDAVYTAEVFSYTKQVTNTISVEAKFLDANDRILVIDDFLANGEAAKGLISLAEQAGAEVVGVGVVVEKAFQGGHDWLVNHGYHLEALASIKEFADGQVIFN</sequence>
<accession>Q04CA6</accession>